<dbReference type="EC" id="4.2.1.3"/>
<dbReference type="EMBL" id="U17709">
    <property type="protein sequence ID" value="AAA80494.1"/>
    <property type="molecule type" value="Genomic_DNA"/>
</dbReference>
<dbReference type="PIR" id="S57805">
    <property type="entry name" value="S57805"/>
</dbReference>
<dbReference type="SMR" id="P49609"/>
<dbReference type="UniPathway" id="UPA00223">
    <property type="reaction ID" value="UER00718"/>
</dbReference>
<dbReference type="GO" id="GO:0005829">
    <property type="term" value="C:cytosol"/>
    <property type="evidence" value="ECO:0007669"/>
    <property type="project" value="TreeGrafter"/>
</dbReference>
<dbReference type="GO" id="GO:0005739">
    <property type="term" value="C:mitochondrion"/>
    <property type="evidence" value="ECO:0007669"/>
    <property type="project" value="UniProtKB-SubCell"/>
</dbReference>
<dbReference type="GO" id="GO:0051539">
    <property type="term" value="F:4 iron, 4 sulfur cluster binding"/>
    <property type="evidence" value="ECO:0007669"/>
    <property type="project" value="UniProtKB-KW"/>
</dbReference>
<dbReference type="GO" id="GO:0003994">
    <property type="term" value="F:aconitate hydratase activity"/>
    <property type="evidence" value="ECO:0007669"/>
    <property type="project" value="UniProtKB-EC"/>
</dbReference>
<dbReference type="GO" id="GO:0046872">
    <property type="term" value="F:metal ion binding"/>
    <property type="evidence" value="ECO:0007669"/>
    <property type="project" value="UniProtKB-KW"/>
</dbReference>
<dbReference type="GO" id="GO:0006099">
    <property type="term" value="P:tricarboxylic acid cycle"/>
    <property type="evidence" value="ECO:0007669"/>
    <property type="project" value="UniProtKB-UniPathway"/>
</dbReference>
<dbReference type="CDD" id="cd01578">
    <property type="entry name" value="AcnA_Mitochon_Swivel"/>
    <property type="match status" value="1"/>
</dbReference>
<dbReference type="CDD" id="cd01584">
    <property type="entry name" value="AcnA_Mitochondrial"/>
    <property type="match status" value="1"/>
</dbReference>
<dbReference type="FunFam" id="3.20.19.10:FF:000002">
    <property type="entry name" value="Aconitate hydratase, mitochondrial"/>
    <property type="match status" value="1"/>
</dbReference>
<dbReference type="FunFam" id="3.30.499.10:FF:000003">
    <property type="entry name" value="Aconitate hydratase, mitochondrial"/>
    <property type="match status" value="1"/>
</dbReference>
<dbReference type="FunFam" id="3.30.499.10:FF:000004">
    <property type="entry name" value="Aconitate hydratase, mitochondrial"/>
    <property type="match status" value="1"/>
</dbReference>
<dbReference type="FunFam" id="3.40.1060.10:FF:000001">
    <property type="entry name" value="Aconitate hydratase, mitochondrial"/>
    <property type="match status" value="1"/>
</dbReference>
<dbReference type="Gene3D" id="3.40.1060.10">
    <property type="entry name" value="Aconitase, Domain 2"/>
    <property type="match status" value="1"/>
</dbReference>
<dbReference type="Gene3D" id="3.30.499.10">
    <property type="entry name" value="Aconitase, domain 3"/>
    <property type="match status" value="2"/>
</dbReference>
<dbReference type="Gene3D" id="3.20.19.10">
    <property type="entry name" value="Aconitase, domain 4"/>
    <property type="match status" value="1"/>
</dbReference>
<dbReference type="InterPro" id="IPR015931">
    <property type="entry name" value="Acnase/IPM_dHydase_lsu_aba_1/3"/>
</dbReference>
<dbReference type="InterPro" id="IPR001030">
    <property type="entry name" value="Acoase/IPM_deHydtase_lsu_aba"/>
</dbReference>
<dbReference type="InterPro" id="IPR015928">
    <property type="entry name" value="Aconitase/3IPM_dehydase_swvl"/>
</dbReference>
<dbReference type="InterPro" id="IPR050926">
    <property type="entry name" value="Aconitase/IPM_isomerase"/>
</dbReference>
<dbReference type="InterPro" id="IPR018136">
    <property type="entry name" value="Aconitase_4Fe-4S_BS"/>
</dbReference>
<dbReference type="InterPro" id="IPR036008">
    <property type="entry name" value="Aconitase_4Fe-4S_dom"/>
</dbReference>
<dbReference type="InterPro" id="IPR015932">
    <property type="entry name" value="Aconitase_dom2"/>
</dbReference>
<dbReference type="InterPro" id="IPR006248">
    <property type="entry name" value="Aconitase_mito-like"/>
</dbReference>
<dbReference type="InterPro" id="IPR000573">
    <property type="entry name" value="AconitaseA/IPMdHydase_ssu_swvl"/>
</dbReference>
<dbReference type="NCBIfam" id="TIGR01340">
    <property type="entry name" value="aconitase_mito"/>
    <property type="match status" value="1"/>
</dbReference>
<dbReference type="NCBIfam" id="NF005558">
    <property type="entry name" value="PRK07229.1"/>
    <property type="match status" value="1"/>
</dbReference>
<dbReference type="PANTHER" id="PTHR43160">
    <property type="entry name" value="ACONITATE HYDRATASE B"/>
    <property type="match status" value="1"/>
</dbReference>
<dbReference type="PANTHER" id="PTHR43160:SF3">
    <property type="entry name" value="ACONITATE HYDRATASE, MITOCHONDRIAL"/>
    <property type="match status" value="1"/>
</dbReference>
<dbReference type="Pfam" id="PF00330">
    <property type="entry name" value="Aconitase"/>
    <property type="match status" value="1"/>
</dbReference>
<dbReference type="Pfam" id="PF00694">
    <property type="entry name" value="Aconitase_C"/>
    <property type="match status" value="1"/>
</dbReference>
<dbReference type="PRINTS" id="PR00415">
    <property type="entry name" value="ACONITASE"/>
</dbReference>
<dbReference type="SUPFAM" id="SSF53732">
    <property type="entry name" value="Aconitase iron-sulfur domain"/>
    <property type="match status" value="1"/>
</dbReference>
<dbReference type="SUPFAM" id="SSF52016">
    <property type="entry name" value="LeuD/IlvD-like"/>
    <property type="match status" value="1"/>
</dbReference>
<dbReference type="PROSITE" id="PS00450">
    <property type="entry name" value="ACONITASE_1"/>
    <property type="match status" value="1"/>
</dbReference>
<dbReference type="PROSITE" id="PS01244">
    <property type="entry name" value="ACONITASE_2"/>
    <property type="match status" value="1"/>
</dbReference>
<comment type="function">
    <text evidence="1">Catalyzes the isomerization of citrate to isocitrate via cis-aconitate.</text>
</comment>
<comment type="catalytic activity">
    <reaction>
        <text>citrate = D-threo-isocitrate</text>
        <dbReference type="Rhea" id="RHEA:10336"/>
        <dbReference type="ChEBI" id="CHEBI:15562"/>
        <dbReference type="ChEBI" id="CHEBI:16947"/>
        <dbReference type="EC" id="4.2.1.3"/>
    </reaction>
</comment>
<comment type="cofactor">
    <cofactor evidence="1">
        <name>[4Fe-4S] cluster</name>
        <dbReference type="ChEBI" id="CHEBI:49883"/>
    </cofactor>
    <text evidence="1">Binds 1 [4Fe-4S] cluster per subunit.</text>
</comment>
<comment type="pathway">
    <text>Carbohydrate metabolism; tricarboxylic acid cycle; isocitrate from oxaloacetate: step 2/2.</text>
</comment>
<comment type="subunit">
    <text evidence="1">Monomer.</text>
</comment>
<comment type="subcellular location">
    <subcellularLocation>
        <location>Mitochondrion</location>
    </subcellularLocation>
</comment>
<comment type="similarity">
    <text evidence="3">Belongs to the aconitase/IPM isomerase family.</text>
</comment>
<sequence length="779" mass="83731">MIAMDRIARIPIARWTSRAFRVSAAARQTPMSPLEAHNELEPVYAAIDDRLNTVRSKLNRPLTLAEKVLYGHLDDPERVPVRGETFLKLRPERVALQDATAQMALIQFMASARPQVAVPSTIHCDHLIAAEVGAEEDMAKAKSQNKEVYDFLASAGAKYGLGFWKPGSGIIHQIVLENYAFPGLLMIGTDSHTPNAGGLGACAVGVGGADAVDVMVGLPWELKAPKVIGVKLTGKLQEWASPKDVILKVAGILTVKGGTGAIVEYFGEGVDSLSCTGMGTICNMGAEIGATTSMFPYNSRMGDYLKATGRDGIASLADSFSEQLRADENAVYDQLIEINLSELEPHINGPFTPDLAHPLSKFKEEVEKNGWPAELTVGLIGSCTNSSYEDMARSASVVKQALSHGVKSKSIFNITPGSEQVRATISRDGILDTFTEAGGTVLANACGPCIGQWNRSDVPKGTPNSIITSFNRNFSQRNDGNPQTHAFVASPEIVTAMSLAGSLKFNPATDSLQGADGAEFKLAAPSGDELPVMGFDPGEDTFQPPSDDSTSILVQIDPDSQRLSFLEPFPAWDGKDYTDMPVLIKARGKCTTDHISMAGPWLKFRGHLDNISNNMLIGAVNDENGEINNVKNAVTGEYGTVPDTARAYKAEGVKWVVIGDENYGEGSSREHAALEPRHLGGVAVIVKSFARIHETNLKKQGMLPLTFNNPADYDKIDSSDKVSLVGLKNLTPGEPVTMTVTKADGTSMDILLNHTFNDEQLEWFRAGSALNKIKIDLGT</sequence>
<feature type="transit peptide" description="Mitochondrion" evidence="2">
    <location>
        <begin position="1"/>
        <end position="28"/>
    </location>
</feature>
<feature type="chain" id="PRO_0000000548" description="Aconitate hydratase, mitochondrial">
    <location>
        <begin position="29"/>
        <end position="779"/>
    </location>
</feature>
<feature type="binding site" evidence="1">
    <location>
        <position position="97"/>
    </location>
    <ligand>
        <name>substrate</name>
    </ligand>
</feature>
<feature type="binding site" evidence="1">
    <location>
        <begin position="190"/>
        <end position="192"/>
    </location>
    <ligand>
        <name>substrate</name>
    </ligand>
</feature>
<feature type="binding site" evidence="1">
    <location>
        <position position="383"/>
    </location>
    <ligand>
        <name>[4Fe-4S] cluster</name>
        <dbReference type="ChEBI" id="CHEBI:49883"/>
    </ligand>
</feature>
<feature type="binding site" evidence="1">
    <location>
        <position position="446"/>
    </location>
    <ligand>
        <name>[4Fe-4S] cluster</name>
        <dbReference type="ChEBI" id="CHEBI:49883"/>
    </ligand>
</feature>
<feature type="binding site" evidence="1">
    <location>
        <position position="449"/>
    </location>
    <ligand>
        <name>[4Fe-4S] cluster</name>
        <dbReference type="ChEBI" id="CHEBI:49883"/>
    </ligand>
</feature>
<feature type="binding site" evidence="1">
    <location>
        <position position="472"/>
    </location>
    <ligand>
        <name>substrate</name>
    </ligand>
</feature>
<feature type="binding site" evidence="1">
    <location>
        <position position="477"/>
    </location>
    <ligand>
        <name>substrate</name>
    </ligand>
</feature>
<feature type="binding site" evidence="1">
    <location>
        <position position="605"/>
    </location>
    <ligand>
        <name>substrate</name>
    </ligand>
</feature>
<feature type="binding site" evidence="1">
    <location>
        <begin position="668"/>
        <end position="669"/>
    </location>
    <ligand>
        <name>substrate</name>
    </ligand>
</feature>
<name>ACON_GRAGA</name>
<keyword id="KW-0004">4Fe-4S</keyword>
<keyword id="KW-0408">Iron</keyword>
<keyword id="KW-0411">Iron-sulfur</keyword>
<keyword id="KW-0456">Lyase</keyword>
<keyword id="KW-0479">Metal-binding</keyword>
<keyword id="KW-0496">Mitochondrion</keyword>
<keyword id="KW-0809">Transit peptide</keyword>
<keyword id="KW-0816">Tricarboxylic acid cycle</keyword>
<accession>P49609</accession>
<protein>
    <recommendedName>
        <fullName>Aconitate hydratase, mitochondrial</fullName>
        <shortName>Aconitase</shortName>
        <ecNumber>4.2.1.3</ecNumber>
    </recommendedName>
    <alternativeName>
        <fullName>Citrate hydro-lyase</fullName>
    </alternativeName>
</protein>
<proteinExistence type="inferred from homology"/>
<organism>
    <name type="scientific">Gracilaria gracilis</name>
    <name type="common">Red alga</name>
    <dbReference type="NCBI Taxonomy" id="2777"/>
    <lineage>
        <taxon>Eukaryota</taxon>
        <taxon>Rhodophyta</taxon>
        <taxon>Florideophyceae</taxon>
        <taxon>Rhodymeniophycidae</taxon>
        <taxon>Gracilariales</taxon>
        <taxon>Gracilariaceae</taxon>
        <taxon>Gracilaria</taxon>
    </lineage>
</organism>
<reference key="1">
    <citation type="journal article" date="1995" name="Plant Mol. Biol.">
        <title>Characterization of the nuclear gene encoding mitochondrial aconitase in the marine red alga Gracilaria verrucosa.</title>
        <authorList>
            <person name="Zhou Y.H."/>
            <person name="Ragan M.A."/>
        </authorList>
    </citation>
    <scope>NUCLEOTIDE SEQUENCE [GENOMIC DNA]</scope>
</reference>
<evidence type="ECO:0000250" key="1"/>
<evidence type="ECO:0000255" key="2"/>
<evidence type="ECO:0000305" key="3"/>